<comment type="catalytic activity">
    <reaction evidence="1">
        <text>2-(N(omega)-L-arginino)succinate = fumarate + L-arginine</text>
        <dbReference type="Rhea" id="RHEA:24020"/>
        <dbReference type="ChEBI" id="CHEBI:29806"/>
        <dbReference type="ChEBI" id="CHEBI:32682"/>
        <dbReference type="ChEBI" id="CHEBI:57472"/>
        <dbReference type="EC" id="4.3.2.1"/>
    </reaction>
</comment>
<comment type="pathway">
    <text evidence="1">Amino-acid biosynthesis; L-arginine biosynthesis; L-arginine from L-ornithine and carbamoyl phosphate: step 3/3.</text>
</comment>
<comment type="subcellular location">
    <subcellularLocation>
        <location evidence="1">Cytoplasm</location>
    </subcellularLocation>
</comment>
<comment type="similarity">
    <text evidence="1">Belongs to the lyase 1 family. Argininosuccinate lyase subfamily.</text>
</comment>
<feature type="chain" id="PRO_1000089115" description="Argininosuccinate lyase">
    <location>
        <begin position="1"/>
        <end position="458"/>
    </location>
</feature>
<protein>
    <recommendedName>
        <fullName evidence="1">Argininosuccinate lyase</fullName>
        <shortName evidence="1">ASAL</shortName>
        <ecNumber evidence="1">4.3.2.1</ecNumber>
    </recommendedName>
    <alternativeName>
        <fullName evidence="1">Arginosuccinase</fullName>
    </alternativeName>
</protein>
<name>ARLY_SALPK</name>
<keyword id="KW-0028">Amino-acid biosynthesis</keyword>
<keyword id="KW-0055">Arginine biosynthesis</keyword>
<keyword id="KW-0963">Cytoplasm</keyword>
<keyword id="KW-0456">Lyase</keyword>
<gene>
    <name evidence="1" type="primary">argH</name>
    <name type="ordered locus">SSPA3687</name>
</gene>
<accession>B5BJN4</accession>
<dbReference type="EC" id="4.3.2.1" evidence="1"/>
<dbReference type="EMBL" id="FM200053">
    <property type="protein sequence ID" value="CAR61970.1"/>
    <property type="molecule type" value="Genomic_DNA"/>
</dbReference>
<dbReference type="RefSeq" id="WP_001230040.1">
    <property type="nucleotide sequence ID" value="NC_011147.1"/>
</dbReference>
<dbReference type="SMR" id="B5BJN4"/>
<dbReference type="KEGG" id="sek:SSPA3687"/>
<dbReference type="HOGENOM" id="CLU_027272_2_3_6"/>
<dbReference type="UniPathway" id="UPA00068">
    <property type="reaction ID" value="UER00114"/>
</dbReference>
<dbReference type="Proteomes" id="UP000001869">
    <property type="component" value="Chromosome"/>
</dbReference>
<dbReference type="GO" id="GO:0005829">
    <property type="term" value="C:cytosol"/>
    <property type="evidence" value="ECO:0007669"/>
    <property type="project" value="TreeGrafter"/>
</dbReference>
<dbReference type="GO" id="GO:0004056">
    <property type="term" value="F:argininosuccinate lyase activity"/>
    <property type="evidence" value="ECO:0007669"/>
    <property type="project" value="UniProtKB-UniRule"/>
</dbReference>
<dbReference type="GO" id="GO:0042450">
    <property type="term" value="P:arginine biosynthetic process via ornithine"/>
    <property type="evidence" value="ECO:0007669"/>
    <property type="project" value="InterPro"/>
</dbReference>
<dbReference type="GO" id="GO:0006526">
    <property type="term" value="P:L-arginine biosynthetic process"/>
    <property type="evidence" value="ECO:0007669"/>
    <property type="project" value="UniProtKB-UniRule"/>
</dbReference>
<dbReference type="CDD" id="cd01359">
    <property type="entry name" value="Argininosuccinate_lyase"/>
    <property type="match status" value="1"/>
</dbReference>
<dbReference type="FunFam" id="1.10.275.10:FF:000004">
    <property type="entry name" value="Argininosuccinate lyase"/>
    <property type="match status" value="1"/>
</dbReference>
<dbReference type="FunFam" id="1.10.40.30:FF:000001">
    <property type="entry name" value="Argininosuccinate lyase"/>
    <property type="match status" value="1"/>
</dbReference>
<dbReference type="FunFam" id="1.20.200.10:FF:000006">
    <property type="entry name" value="Argininosuccinate lyase"/>
    <property type="match status" value="1"/>
</dbReference>
<dbReference type="Gene3D" id="1.10.40.30">
    <property type="entry name" value="Fumarase/aspartase (C-terminal domain)"/>
    <property type="match status" value="1"/>
</dbReference>
<dbReference type="Gene3D" id="1.20.200.10">
    <property type="entry name" value="Fumarase/aspartase (Central domain)"/>
    <property type="match status" value="1"/>
</dbReference>
<dbReference type="Gene3D" id="1.10.275.10">
    <property type="entry name" value="Fumarase/aspartase (N-terminal domain)"/>
    <property type="match status" value="1"/>
</dbReference>
<dbReference type="HAMAP" id="MF_00006">
    <property type="entry name" value="Arg_succ_lyase"/>
    <property type="match status" value="1"/>
</dbReference>
<dbReference type="InterPro" id="IPR029419">
    <property type="entry name" value="Arg_succ_lyase_C"/>
</dbReference>
<dbReference type="InterPro" id="IPR009049">
    <property type="entry name" value="Argininosuccinate_lyase"/>
</dbReference>
<dbReference type="InterPro" id="IPR024083">
    <property type="entry name" value="Fumarase/histidase_N"/>
</dbReference>
<dbReference type="InterPro" id="IPR020557">
    <property type="entry name" value="Fumarate_lyase_CS"/>
</dbReference>
<dbReference type="InterPro" id="IPR000362">
    <property type="entry name" value="Fumarate_lyase_fam"/>
</dbReference>
<dbReference type="InterPro" id="IPR022761">
    <property type="entry name" value="Fumarate_lyase_N"/>
</dbReference>
<dbReference type="InterPro" id="IPR008948">
    <property type="entry name" value="L-Aspartase-like"/>
</dbReference>
<dbReference type="NCBIfam" id="TIGR00838">
    <property type="entry name" value="argH"/>
    <property type="match status" value="1"/>
</dbReference>
<dbReference type="NCBIfam" id="NF008964">
    <property type="entry name" value="PRK12308.1"/>
    <property type="match status" value="1"/>
</dbReference>
<dbReference type="PANTHER" id="PTHR43814">
    <property type="entry name" value="ARGININOSUCCINATE LYASE"/>
    <property type="match status" value="1"/>
</dbReference>
<dbReference type="PANTHER" id="PTHR43814:SF1">
    <property type="entry name" value="ARGININOSUCCINATE LYASE"/>
    <property type="match status" value="1"/>
</dbReference>
<dbReference type="Pfam" id="PF14698">
    <property type="entry name" value="ASL_C2"/>
    <property type="match status" value="1"/>
</dbReference>
<dbReference type="Pfam" id="PF00206">
    <property type="entry name" value="Lyase_1"/>
    <property type="match status" value="1"/>
</dbReference>
<dbReference type="PRINTS" id="PR00145">
    <property type="entry name" value="ARGSUCLYASE"/>
</dbReference>
<dbReference type="PRINTS" id="PR00149">
    <property type="entry name" value="FUMRATELYASE"/>
</dbReference>
<dbReference type="SUPFAM" id="SSF48557">
    <property type="entry name" value="L-aspartase-like"/>
    <property type="match status" value="1"/>
</dbReference>
<dbReference type="PROSITE" id="PS00163">
    <property type="entry name" value="FUMARATE_LYASES"/>
    <property type="match status" value="1"/>
</dbReference>
<evidence type="ECO:0000255" key="1">
    <source>
        <dbReference type="HAMAP-Rule" id="MF_00006"/>
    </source>
</evidence>
<proteinExistence type="inferred from homology"/>
<reference key="1">
    <citation type="journal article" date="2009" name="BMC Genomics">
        <title>Pseudogene accumulation in the evolutionary histories of Salmonella enterica serovars Paratyphi A and Typhi.</title>
        <authorList>
            <person name="Holt K.E."/>
            <person name="Thomson N.R."/>
            <person name="Wain J."/>
            <person name="Langridge G.C."/>
            <person name="Hasan R."/>
            <person name="Bhutta Z.A."/>
            <person name="Quail M.A."/>
            <person name="Norbertczak H."/>
            <person name="Walker D."/>
            <person name="Simmonds M."/>
            <person name="White B."/>
            <person name="Bason N."/>
            <person name="Mungall K."/>
            <person name="Dougan G."/>
            <person name="Parkhill J."/>
        </authorList>
    </citation>
    <scope>NUCLEOTIDE SEQUENCE [LARGE SCALE GENOMIC DNA]</scope>
    <source>
        <strain>AKU_12601</strain>
    </source>
</reference>
<sequence>MALWGGRFTQAADQRFKQFNDSLRFDYRLAEQDIVGSVAWSKALVTVGVLTADEQRQLEEALNVLLEEVRANPQQILQSDAEDIHSWVEGKLIDKVGQLGKKLHTGRSRNDQVATDLKLWCKETVRELLTANRLLQSALVETAQVNQDAVMPGYTHLQRAQPVTFAHWCLAYVEMLARDESRLQDTLKRLDVSPLGCGALAGTAYEIDREQLAGWLGFASATRNSLDSVSDRDHVLELLSDAAIGMVHLSRFAEDLIFFNSGEAGFVELSDRVTSGSSLMPQKKNPDALELIRGKCGRVQGALTGMMMTLKGLPLAYNKDMQEDKEGLFDALDTWLDCLHMAALVLDGIQVKRPRCQEAAQQGYANATELADYLVAKGVPFREAHHIVGEAVVEAIRQGKPLEALPLADLQKFSRVIGDDVYPILSLQSCLDKRAAKGGVSPQQVAQAIDDARARLAL</sequence>
<organism>
    <name type="scientific">Salmonella paratyphi A (strain AKU_12601)</name>
    <dbReference type="NCBI Taxonomy" id="554290"/>
    <lineage>
        <taxon>Bacteria</taxon>
        <taxon>Pseudomonadati</taxon>
        <taxon>Pseudomonadota</taxon>
        <taxon>Gammaproteobacteria</taxon>
        <taxon>Enterobacterales</taxon>
        <taxon>Enterobacteriaceae</taxon>
        <taxon>Salmonella</taxon>
    </lineage>
</organism>